<dbReference type="EC" id="2.7.1.11" evidence="2"/>
<dbReference type="EMBL" id="AB016886">
    <property type="protein sequence ID" value="BAB11328.1"/>
    <property type="molecule type" value="Genomic_DNA"/>
</dbReference>
<dbReference type="EMBL" id="CP002688">
    <property type="protein sequence ID" value="AED95574.1"/>
    <property type="molecule type" value="Genomic_DNA"/>
</dbReference>
<dbReference type="EMBL" id="AY056779">
    <property type="protein sequence ID" value="AAL09725.1"/>
    <property type="molecule type" value="mRNA"/>
</dbReference>
<dbReference type="EMBL" id="AY090379">
    <property type="protein sequence ID" value="AAL91281.1"/>
    <property type="molecule type" value="mRNA"/>
</dbReference>
<dbReference type="RefSeq" id="NP_199592.1">
    <property type="nucleotide sequence ID" value="NM_124155.3"/>
</dbReference>
<dbReference type="SMR" id="Q9FIK0"/>
<dbReference type="BioGRID" id="20080">
    <property type="interactions" value="7"/>
</dbReference>
<dbReference type="FunCoup" id="Q9FIK0">
    <property type="interactions" value="611"/>
</dbReference>
<dbReference type="IntAct" id="Q9FIK0">
    <property type="interactions" value="7"/>
</dbReference>
<dbReference type="STRING" id="3702.Q9FIK0"/>
<dbReference type="GlyGen" id="Q9FIK0">
    <property type="glycosylation" value="1 site"/>
</dbReference>
<dbReference type="PaxDb" id="3702-AT5G47810.1"/>
<dbReference type="ProteomicsDB" id="236670"/>
<dbReference type="EnsemblPlants" id="AT5G47810.1">
    <property type="protein sequence ID" value="AT5G47810.1"/>
    <property type="gene ID" value="AT5G47810"/>
</dbReference>
<dbReference type="GeneID" id="834832"/>
<dbReference type="Gramene" id="AT5G47810.1">
    <property type="protein sequence ID" value="AT5G47810.1"/>
    <property type="gene ID" value="AT5G47810"/>
</dbReference>
<dbReference type="KEGG" id="ath:AT5G47810"/>
<dbReference type="Araport" id="AT5G47810"/>
<dbReference type="TAIR" id="AT5G47810">
    <property type="gene designation" value="PFK2"/>
</dbReference>
<dbReference type="eggNOG" id="KOG2440">
    <property type="taxonomic scope" value="Eukaryota"/>
</dbReference>
<dbReference type="HOGENOM" id="CLU_020655_7_3_1"/>
<dbReference type="InParanoid" id="Q9FIK0"/>
<dbReference type="OMA" id="SRIHFRG"/>
<dbReference type="PhylomeDB" id="Q9FIK0"/>
<dbReference type="BioCyc" id="ARA:AT5G47810-MONOMER"/>
<dbReference type="BRENDA" id="2.7.1.11">
    <property type="organism ID" value="399"/>
</dbReference>
<dbReference type="UniPathway" id="UPA00109">
    <property type="reaction ID" value="UER00182"/>
</dbReference>
<dbReference type="PRO" id="PR:Q9FIK0"/>
<dbReference type="Proteomes" id="UP000006548">
    <property type="component" value="Chromosome 5"/>
</dbReference>
<dbReference type="ExpressionAtlas" id="Q9FIK0">
    <property type="expression patterns" value="baseline and differential"/>
</dbReference>
<dbReference type="GO" id="GO:0005829">
    <property type="term" value="C:cytosol"/>
    <property type="evidence" value="ECO:0000314"/>
    <property type="project" value="TAIR"/>
</dbReference>
<dbReference type="GO" id="GO:0003872">
    <property type="term" value="F:6-phosphofructokinase activity"/>
    <property type="evidence" value="ECO:0000250"/>
    <property type="project" value="TAIR"/>
</dbReference>
<dbReference type="GO" id="GO:0005524">
    <property type="term" value="F:ATP binding"/>
    <property type="evidence" value="ECO:0007669"/>
    <property type="project" value="UniProtKB-KW"/>
</dbReference>
<dbReference type="GO" id="GO:0046872">
    <property type="term" value="F:metal ion binding"/>
    <property type="evidence" value="ECO:0007669"/>
    <property type="project" value="UniProtKB-KW"/>
</dbReference>
<dbReference type="GO" id="GO:0006002">
    <property type="term" value="P:fructose 6-phosphate metabolic process"/>
    <property type="evidence" value="ECO:0007669"/>
    <property type="project" value="InterPro"/>
</dbReference>
<dbReference type="GO" id="GO:0006096">
    <property type="term" value="P:glycolytic process"/>
    <property type="evidence" value="ECO:0000250"/>
    <property type="project" value="TAIR"/>
</dbReference>
<dbReference type="FunFam" id="3.40.50.450:FF:000002">
    <property type="entry name" value="ATP-dependent 6-phosphofructokinase"/>
    <property type="match status" value="1"/>
</dbReference>
<dbReference type="Gene3D" id="3.40.50.450">
    <property type="match status" value="1"/>
</dbReference>
<dbReference type="HAMAP" id="MF_01981">
    <property type="entry name" value="Phosphofructokinase_II_X"/>
    <property type="match status" value="1"/>
</dbReference>
<dbReference type="InterPro" id="IPR022953">
    <property type="entry name" value="ATP_PFK"/>
</dbReference>
<dbReference type="InterPro" id="IPR050929">
    <property type="entry name" value="PFKA"/>
</dbReference>
<dbReference type="InterPro" id="IPR000023">
    <property type="entry name" value="Phosphofructokinase_dom"/>
</dbReference>
<dbReference type="InterPro" id="IPR035966">
    <property type="entry name" value="PKF_sf"/>
</dbReference>
<dbReference type="InterPro" id="IPR012004">
    <property type="entry name" value="PyroP-dep_PFK_TP0108"/>
</dbReference>
<dbReference type="NCBIfam" id="NF005301">
    <property type="entry name" value="PRK06830.1"/>
    <property type="match status" value="1"/>
</dbReference>
<dbReference type="PANTHER" id="PTHR45770">
    <property type="entry name" value="ATP-DEPENDENT 6-PHOSPHOFRUCTOKINASE 1"/>
    <property type="match status" value="1"/>
</dbReference>
<dbReference type="Pfam" id="PF00365">
    <property type="entry name" value="PFK"/>
    <property type="match status" value="1"/>
</dbReference>
<dbReference type="PIRSF" id="PIRSF000534">
    <property type="entry name" value="PPi_PFK_TP0108"/>
    <property type="match status" value="1"/>
</dbReference>
<dbReference type="PRINTS" id="PR00476">
    <property type="entry name" value="PHFRCTKINASE"/>
</dbReference>
<dbReference type="SUPFAM" id="SSF53784">
    <property type="entry name" value="Phosphofructokinase"/>
    <property type="match status" value="1"/>
</dbReference>
<gene>
    <name evidence="2" type="primary">PFK2</name>
    <name type="ordered locus">At5g47810</name>
    <name type="ORF">MCA23.13</name>
</gene>
<accession>Q9FIK0</accession>
<organism>
    <name type="scientific">Arabidopsis thaliana</name>
    <name type="common">Mouse-ear cress</name>
    <dbReference type="NCBI Taxonomy" id="3702"/>
    <lineage>
        <taxon>Eukaryota</taxon>
        <taxon>Viridiplantae</taxon>
        <taxon>Streptophyta</taxon>
        <taxon>Embryophyta</taxon>
        <taxon>Tracheophyta</taxon>
        <taxon>Spermatophyta</taxon>
        <taxon>Magnoliopsida</taxon>
        <taxon>eudicotyledons</taxon>
        <taxon>Gunneridae</taxon>
        <taxon>Pentapetalae</taxon>
        <taxon>rosids</taxon>
        <taxon>malvids</taxon>
        <taxon>Brassicales</taxon>
        <taxon>Brassicaceae</taxon>
        <taxon>Camelineae</taxon>
        <taxon>Arabidopsis</taxon>
    </lineage>
</organism>
<reference key="1">
    <citation type="journal article" date="1998" name="DNA Res.">
        <title>Structural analysis of Arabidopsis thaliana chromosome 5. VIII. Sequence features of the regions of 1,081,958 bp covered by seventeen physically assigned P1 and TAC clones.</title>
        <authorList>
            <person name="Asamizu E."/>
            <person name="Sato S."/>
            <person name="Kaneko T."/>
            <person name="Nakamura Y."/>
            <person name="Kotani H."/>
            <person name="Miyajima N."/>
            <person name="Tabata S."/>
        </authorList>
    </citation>
    <scope>NUCLEOTIDE SEQUENCE [LARGE SCALE GENOMIC DNA]</scope>
    <source>
        <strain>cv. Columbia</strain>
    </source>
</reference>
<reference key="2">
    <citation type="journal article" date="2017" name="Plant J.">
        <title>Araport11: a complete reannotation of the Arabidopsis thaliana reference genome.</title>
        <authorList>
            <person name="Cheng C.Y."/>
            <person name="Krishnakumar V."/>
            <person name="Chan A.P."/>
            <person name="Thibaud-Nissen F."/>
            <person name="Schobel S."/>
            <person name="Town C.D."/>
        </authorList>
    </citation>
    <scope>GENOME REANNOTATION</scope>
    <source>
        <strain>cv. Columbia</strain>
    </source>
</reference>
<reference key="3">
    <citation type="journal article" date="2003" name="Science">
        <title>Empirical analysis of transcriptional activity in the Arabidopsis genome.</title>
        <authorList>
            <person name="Yamada K."/>
            <person name="Lim J."/>
            <person name="Dale J.M."/>
            <person name="Chen H."/>
            <person name="Shinn P."/>
            <person name="Palm C.J."/>
            <person name="Southwick A.M."/>
            <person name="Wu H.C."/>
            <person name="Kim C.J."/>
            <person name="Nguyen M."/>
            <person name="Pham P.K."/>
            <person name="Cheuk R.F."/>
            <person name="Karlin-Newmann G."/>
            <person name="Liu S.X."/>
            <person name="Lam B."/>
            <person name="Sakano H."/>
            <person name="Wu T."/>
            <person name="Yu G."/>
            <person name="Miranda M."/>
            <person name="Quach H.L."/>
            <person name="Tripp M."/>
            <person name="Chang C.H."/>
            <person name="Lee J.M."/>
            <person name="Toriumi M.J."/>
            <person name="Chan M.M."/>
            <person name="Tang C.C."/>
            <person name="Onodera C.S."/>
            <person name="Deng J.M."/>
            <person name="Akiyama K."/>
            <person name="Ansari Y."/>
            <person name="Arakawa T."/>
            <person name="Banh J."/>
            <person name="Banno F."/>
            <person name="Bowser L."/>
            <person name="Brooks S.Y."/>
            <person name="Carninci P."/>
            <person name="Chao Q."/>
            <person name="Choy N."/>
            <person name="Enju A."/>
            <person name="Goldsmith A.D."/>
            <person name="Gurjal M."/>
            <person name="Hansen N.F."/>
            <person name="Hayashizaki Y."/>
            <person name="Johnson-Hopson C."/>
            <person name="Hsuan V.W."/>
            <person name="Iida K."/>
            <person name="Karnes M."/>
            <person name="Khan S."/>
            <person name="Koesema E."/>
            <person name="Ishida J."/>
            <person name="Jiang P.X."/>
            <person name="Jones T."/>
            <person name="Kawai J."/>
            <person name="Kamiya A."/>
            <person name="Meyers C."/>
            <person name="Nakajima M."/>
            <person name="Narusaka M."/>
            <person name="Seki M."/>
            <person name="Sakurai T."/>
            <person name="Satou M."/>
            <person name="Tamse R."/>
            <person name="Vaysberg M."/>
            <person name="Wallender E.K."/>
            <person name="Wong C."/>
            <person name="Yamamura Y."/>
            <person name="Yuan S."/>
            <person name="Shinozaki K."/>
            <person name="Davis R.W."/>
            <person name="Theologis A."/>
            <person name="Ecker J.R."/>
        </authorList>
    </citation>
    <scope>NUCLEOTIDE SEQUENCE [LARGE SCALE MRNA]</scope>
    <source>
        <strain>cv. Columbia</strain>
    </source>
</reference>
<reference key="4">
    <citation type="journal article" date="2007" name="FEBS Lett.">
        <title>Characterisation of the ATP-dependent phosphofructokinase gene family from Arabidopsis thaliana.</title>
        <authorList>
            <person name="Mustroph A."/>
            <person name="Sonnewald U."/>
            <person name="Biemelt S."/>
        </authorList>
    </citation>
    <scope>CATALYTIC ACTIVITY</scope>
    <scope>TISSUE SPECIFICITY</scope>
    <scope>SUBCELLULAR LOCATION</scope>
    <scope>GENE FAMILY</scope>
    <scope>NOMENCLATURE</scope>
</reference>
<sequence length="444" mass="49182">MAAETSIRKLPSLSGLRHRRNPLEDNPYFHPSNGFYITPSDVILAQVAYDHSAHSQSRVAYHRAGPRREIMYEPSAVKAAIVTCGGLCPGMNTVIRELVVGLWELYGVREIYGIPAGYRGFYSMKAVKLDPKAVHDWHKKGGTVLATSRGGFHLQKIVDAIHLNGYNQVYIIGGDGTMRGAVEIFKEISLRKLEVGITVIPKTVDNDVGIIDRSFGFQTAVEMAQEAISAAHVEAESAVNGIGLVKLMGRSTGHIALHATLSSRDVDCCLIPEMDFYLEGKGGLFEFLEKRLKERGHAVLVVAEGAGQEMIPRNESQKQERDESGNAVFLDVGVWFKSVLKAWWEREHPDELFTVKYIDPTYMIRAVPANATDNLYCTLLAHSAIHGVMAGYTGFVPGPINGNYAYIPLEEVAQTKNQVNTRDHKWAWVRSVTNQPDFETNVKG</sequence>
<proteinExistence type="evidence at protein level"/>
<name>PFKA2_ARATH</name>
<comment type="function">
    <text evidence="2">Catalyzes the phosphorylation of D-fructose 6-phosphate to fructose 1,6-bisphosphate by ATP, the first committing step of glycolysis.</text>
</comment>
<comment type="catalytic activity">
    <reaction evidence="2 3">
        <text>beta-D-fructose 6-phosphate + ATP = beta-D-fructose 1,6-bisphosphate + ADP + H(+)</text>
        <dbReference type="Rhea" id="RHEA:16109"/>
        <dbReference type="ChEBI" id="CHEBI:15378"/>
        <dbReference type="ChEBI" id="CHEBI:30616"/>
        <dbReference type="ChEBI" id="CHEBI:32966"/>
        <dbReference type="ChEBI" id="CHEBI:57634"/>
        <dbReference type="ChEBI" id="CHEBI:456216"/>
        <dbReference type="EC" id="2.7.1.11"/>
    </reaction>
</comment>
<comment type="cofactor">
    <cofactor evidence="2">
        <name>Mg(2+)</name>
        <dbReference type="ChEBI" id="CHEBI:18420"/>
    </cofactor>
</comment>
<comment type="activity regulation">
    <text evidence="2">Allosterically activated by AMP.</text>
</comment>
<comment type="pathway">
    <text evidence="2">Carbohydrate degradation; glycolysis; D-glyceraldehyde 3-phosphate and glycerone phosphate from D-glucose: step 3/4.</text>
</comment>
<comment type="subunit">
    <text evidence="2">Homotetramer.</text>
</comment>
<comment type="subcellular location">
    <subcellularLocation>
        <location evidence="2 3">Cytoplasm</location>
    </subcellularLocation>
</comment>
<comment type="tissue specificity">
    <text evidence="3">Mostly expressed in roots and stems.</text>
</comment>
<comment type="similarity">
    <text evidence="2">Belongs to the phosphofructokinase type A (PFKA) family. PPi-dependent PFK group II subfamily. Atypical ATP-dependent clade 'X' sub-subfamily.</text>
</comment>
<protein>
    <recommendedName>
        <fullName evidence="2">ATP-dependent 6-phosphofructokinase 2</fullName>
        <shortName evidence="2">ATP-PFK 2</shortName>
        <shortName evidence="2">Phosphofructokinase 2</shortName>
        <ecNumber evidence="2">2.7.1.11</ecNumber>
    </recommendedName>
    <alternativeName>
        <fullName evidence="2">Phosphohexokinase 2</fullName>
    </alternativeName>
</protein>
<keyword id="KW-0021">Allosteric enzyme</keyword>
<keyword id="KW-0067">ATP-binding</keyword>
<keyword id="KW-0963">Cytoplasm</keyword>
<keyword id="KW-0324">Glycolysis</keyword>
<keyword id="KW-0418">Kinase</keyword>
<keyword id="KW-0460">Magnesium</keyword>
<keyword id="KW-0479">Metal-binding</keyword>
<keyword id="KW-0547">Nucleotide-binding</keyword>
<keyword id="KW-0597">Phosphoprotein</keyword>
<keyword id="KW-1185">Reference proteome</keyword>
<keyword id="KW-0808">Transferase</keyword>
<feature type="chain" id="PRO_0000330769" description="ATP-dependent 6-phosphofructokinase 2">
    <location>
        <begin position="1"/>
        <end position="444"/>
    </location>
</feature>
<feature type="active site" description="Proton acceptor" evidence="2">
    <location>
        <position position="205"/>
    </location>
</feature>
<feature type="binding site" evidence="2">
    <location>
        <position position="86"/>
    </location>
    <ligand>
        <name>ATP</name>
        <dbReference type="ChEBI" id="CHEBI:30616"/>
    </ligand>
</feature>
<feature type="binding site" evidence="2">
    <location>
        <begin position="149"/>
        <end position="150"/>
    </location>
    <ligand>
        <name>ATP</name>
        <dbReference type="ChEBI" id="CHEBI:30616"/>
    </ligand>
</feature>
<feature type="binding site" evidence="2">
    <location>
        <begin position="174"/>
        <end position="177"/>
    </location>
    <ligand>
        <name>ATP</name>
        <dbReference type="ChEBI" id="CHEBI:30616"/>
    </ligand>
</feature>
<feature type="binding site" evidence="2">
    <location>
        <position position="175"/>
    </location>
    <ligand>
        <name>Mg(2+)</name>
        <dbReference type="ChEBI" id="CHEBI:18420"/>
        <note>catalytic</note>
    </ligand>
</feature>
<feature type="binding site" evidence="2">
    <location>
        <begin position="203"/>
        <end position="205"/>
    </location>
    <ligand>
        <name>substrate</name>
    </ligand>
</feature>
<feature type="binding site" evidence="2">
    <location>
        <begin position="248"/>
        <end position="250"/>
    </location>
    <ligand>
        <name>substrate</name>
    </ligand>
</feature>
<feature type="binding site" evidence="2">
    <location>
        <position position="304"/>
    </location>
    <ligand>
        <name>substrate</name>
    </ligand>
</feature>
<feature type="binding site" evidence="2">
    <location>
        <begin position="362"/>
        <end position="365"/>
    </location>
    <ligand>
        <name>substrate</name>
    </ligand>
</feature>
<feature type="site" description="Important for substrate specificity; cannot use PPi as phosphoryl donor" evidence="2">
    <location>
        <position position="176"/>
    </location>
</feature>
<feature type="modified residue" description="Phosphoserine" evidence="1">
    <location>
        <position position="55"/>
    </location>
</feature>
<evidence type="ECO:0000250" key="1">
    <source>
        <dbReference type="UniProtKB" id="Q9M0F9"/>
    </source>
</evidence>
<evidence type="ECO:0000255" key="2">
    <source>
        <dbReference type="HAMAP-Rule" id="MF_03186"/>
    </source>
</evidence>
<evidence type="ECO:0000269" key="3">
    <source>
    </source>
</evidence>